<dbReference type="EC" id="2.7.4.22" evidence="1"/>
<dbReference type="EMBL" id="CP000075">
    <property type="protein sequence ID" value="AAY36396.1"/>
    <property type="molecule type" value="Genomic_DNA"/>
</dbReference>
<dbReference type="RefSeq" id="WP_003339591.1">
    <property type="nucleotide sequence ID" value="NC_007005.1"/>
</dbReference>
<dbReference type="RefSeq" id="YP_234434.1">
    <property type="nucleotide sequence ID" value="NC_007005.1"/>
</dbReference>
<dbReference type="SMR" id="Q4ZWS6"/>
<dbReference type="STRING" id="205918.Psyr_1345"/>
<dbReference type="GeneID" id="77277301"/>
<dbReference type="KEGG" id="psb:Psyr_1345"/>
<dbReference type="PATRIC" id="fig|205918.7.peg.1378"/>
<dbReference type="eggNOG" id="COG0528">
    <property type="taxonomic scope" value="Bacteria"/>
</dbReference>
<dbReference type="HOGENOM" id="CLU_033861_0_0_6"/>
<dbReference type="OrthoDB" id="9807458at2"/>
<dbReference type="UniPathway" id="UPA00159">
    <property type="reaction ID" value="UER00275"/>
</dbReference>
<dbReference type="Proteomes" id="UP000000426">
    <property type="component" value="Chromosome"/>
</dbReference>
<dbReference type="GO" id="GO:0005829">
    <property type="term" value="C:cytosol"/>
    <property type="evidence" value="ECO:0007669"/>
    <property type="project" value="TreeGrafter"/>
</dbReference>
<dbReference type="GO" id="GO:0005524">
    <property type="term" value="F:ATP binding"/>
    <property type="evidence" value="ECO:0007669"/>
    <property type="project" value="UniProtKB-KW"/>
</dbReference>
<dbReference type="GO" id="GO:0033862">
    <property type="term" value="F:UMP kinase activity"/>
    <property type="evidence" value="ECO:0007669"/>
    <property type="project" value="UniProtKB-EC"/>
</dbReference>
<dbReference type="GO" id="GO:0044210">
    <property type="term" value="P:'de novo' CTP biosynthetic process"/>
    <property type="evidence" value="ECO:0007669"/>
    <property type="project" value="UniProtKB-UniRule"/>
</dbReference>
<dbReference type="GO" id="GO:0006225">
    <property type="term" value="P:UDP biosynthetic process"/>
    <property type="evidence" value="ECO:0007669"/>
    <property type="project" value="TreeGrafter"/>
</dbReference>
<dbReference type="CDD" id="cd04254">
    <property type="entry name" value="AAK_UMPK-PyrH-Ec"/>
    <property type="match status" value="1"/>
</dbReference>
<dbReference type="FunFam" id="3.40.1160.10:FF:000001">
    <property type="entry name" value="Uridylate kinase"/>
    <property type="match status" value="1"/>
</dbReference>
<dbReference type="Gene3D" id="3.40.1160.10">
    <property type="entry name" value="Acetylglutamate kinase-like"/>
    <property type="match status" value="1"/>
</dbReference>
<dbReference type="HAMAP" id="MF_01220_B">
    <property type="entry name" value="PyrH_B"/>
    <property type="match status" value="1"/>
</dbReference>
<dbReference type="InterPro" id="IPR036393">
    <property type="entry name" value="AceGlu_kinase-like_sf"/>
</dbReference>
<dbReference type="InterPro" id="IPR001048">
    <property type="entry name" value="Asp/Glu/Uridylate_kinase"/>
</dbReference>
<dbReference type="InterPro" id="IPR011817">
    <property type="entry name" value="Uridylate_kinase"/>
</dbReference>
<dbReference type="InterPro" id="IPR015963">
    <property type="entry name" value="Uridylate_kinase_bac"/>
</dbReference>
<dbReference type="NCBIfam" id="TIGR02075">
    <property type="entry name" value="pyrH_bact"/>
    <property type="match status" value="1"/>
</dbReference>
<dbReference type="PANTHER" id="PTHR42833">
    <property type="entry name" value="URIDYLATE KINASE"/>
    <property type="match status" value="1"/>
</dbReference>
<dbReference type="PANTHER" id="PTHR42833:SF4">
    <property type="entry name" value="URIDYLATE KINASE PUMPKIN, CHLOROPLASTIC"/>
    <property type="match status" value="1"/>
</dbReference>
<dbReference type="Pfam" id="PF00696">
    <property type="entry name" value="AA_kinase"/>
    <property type="match status" value="1"/>
</dbReference>
<dbReference type="PIRSF" id="PIRSF005650">
    <property type="entry name" value="Uridylate_kin"/>
    <property type="match status" value="1"/>
</dbReference>
<dbReference type="SUPFAM" id="SSF53633">
    <property type="entry name" value="Carbamate kinase-like"/>
    <property type="match status" value="1"/>
</dbReference>
<proteinExistence type="inferred from homology"/>
<protein>
    <recommendedName>
        <fullName evidence="1">Uridylate kinase</fullName>
        <shortName evidence="1">UK</shortName>
        <ecNumber evidence="1">2.7.4.22</ecNumber>
    </recommendedName>
    <alternativeName>
        <fullName evidence="1">Uridine monophosphate kinase</fullName>
        <shortName evidence="1">UMP kinase</shortName>
        <shortName evidence="1">UMPK</shortName>
    </alternativeName>
</protein>
<gene>
    <name evidence="1" type="primary">pyrH</name>
    <name type="ordered locus">Psyr_1345</name>
</gene>
<organism>
    <name type="scientific">Pseudomonas syringae pv. syringae (strain B728a)</name>
    <dbReference type="NCBI Taxonomy" id="205918"/>
    <lineage>
        <taxon>Bacteria</taxon>
        <taxon>Pseudomonadati</taxon>
        <taxon>Pseudomonadota</taxon>
        <taxon>Gammaproteobacteria</taxon>
        <taxon>Pseudomonadales</taxon>
        <taxon>Pseudomonadaceae</taxon>
        <taxon>Pseudomonas</taxon>
        <taxon>Pseudomonas syringae</taxon>
    </lineage>
</organism>
<feature type="chain" id="PRO_1000053988" description="Uridylate kinase">
    <location>
        <begin position="1"/>
        <end position="246"/>
    </location>
</feature>
<feature type="binding site" evidence="1">
    <location>
        <begin position="18"/>
        <end position="21"/>
    </location>
    <ligand>
        <name>ATP</name>
        <dbReference type="ChEBI" id="CHEBI:30616"/>
    </ligand>
</feature>
<feature type="binding site" evidence="1">
    <location>
        <position position="60"/>
    </location>
    <ligand>
        <name>UMP</name>
        <dbReference type="ChEBI" id="CHEBI:57865"/>
    </ligand>
</feature>
<feature type="binding site" evidence="1">
    <location>
        <position position="61"/>
    </location>
    <ligand>
        <name>ATP</name>
        <dbReference type="ChEBI" id="CHEBI:30616"/>
    </ligand>
</feature>
<feature type="binding site" evidence="1">
    <location>
        <position position="65"/>
    </location>
    <ligand>
        <name>ATP</name>
        <dbReference type="ChEBI" id="CHEBI:30616"/>
    </ligand>
</feature>
<feature type="binding site" evidence="1">
    <location>
        <position position="80"/>
    </location>
    <ligand>
        <name>UMP</name>
        <dbReference type="ChEBI" id="CHEBI:57865"/>
    </ligand>
</feature>
<feature type="binding site" evidence="1">
    <location>
        <begin position="141"/>
        <end position="148"/>
    </location>
    <ligand>
        <name>UMP</name>
        <dbReference type="ChEBI" id="CHEBI:57865"/>
    </ligand>
</feature>
<feature type="binding site" evidence="1">
    <location>
        <position position="168"/>
    </location>
    <ligand>
        <name>ATP</name>
        <dbReference type="ChEBI" id="CHEBI:30616"/>
    </ligand>
</feature>
<feature type="binding site" evidence="1">
    <location>
        <position position="174"/>
    </location>
    <ligand>
        <name>ATP</name>
        <dbReference type="ChEBI" id="CHEBI:30616"/>
    </ligand>
</feature>
<feature type="binding site" evidence="1">
    <location>
        <position position="177"/>
    </location>
    <ligand>
        <name>ATP</name>
        <dbReference type="ChEBI" id="CHEBI:30616"/>
    </ligand>
</feature>
<keyword id="KW-0067">ATP-binding</keyword>
<keyword id="KW-0963">Cytoplasm</keyword>
<keyword id="KW-0418">Kinase</keyword>
<keyword id="KW-0547">Nucleotide-binding</keyword>
<keyword id="KW-0665">Pyrimidine biosynthesis</keyword>
<keyword id="KW-0808">Transferase</keyword>
<sequence length="246" mass="26441">MAQQGSGYQARYKRILLKLSGEALMGSEEFGIDPKVLDRMALEVGQLVGIGVQVGLVIGGGNLFRGAALSAAGMDRVTGDHMGMLATVMNALAMRDALERANITAIVMSAISMVGVTDHYDRRKAMRHLSAKEVVIFAAGTGNPFFTTDSAACLRAIEIDADVVLKATKVDGVYTADPFKDPNAEKFDHLTYDEVLDRKLGVMDLTAICLCRDHKMPLRVFNMNKPGALLNIVHGGAEGTLIEEAQ</sequence>
<name>PYRH_PSEU2</name>
<comment type="function">
    <text evidence="1">Catalyzes the reversible phosphorylation of UMP to UDP.</text>
</comment>
<comment type="catalytic activity">
    <reaction evidence="1">
        <text>UMP + ATP = UDP + ADP</text>
        <dbReference type="Rhea" id="RHEA:24400"/>
        <dbReference type="ChEBI" id="CHEBI:30616"/>
        <dbReference type="ChEBI" id="CHEBI:57865"/>
        <dbReference type="ChEBI" id="CHEBI:58223"/>
        <dbReference type="ChEBI" id="CHEBI:456216"/>
        <dbReference type="EC" id="2.7.4.22"/>
    </reaction>
</comment>
<comment type="activity regulation">
    <text evidence="1">Inhibited by UTP.</text>
</comment>
<comment type="pathway">
    <text evidence="1">Pyrimidine metabolism; CTP biosynthesis via de novo pathway; UDP from UMP (UMPK route): step 1/1.</text>
</comment>
<comment type="subunit">
    <text evidence="1">Homohexamer.</text>
</comment>
<comment type="subcellular location">
    <subcellularLocation>
        <location evidence="1">Cytoplasm</location>
    </subcellularLocation>
</comment>
<comment type="similarity">
    <text evidence="1">Belongs to the UMP kinase family.</text>
</comment>
<evidence type="ECO:0000255" key="1">
    <source>
        <dbReference type="HAMAP-Rule" id="MF_01220"/>
    </source>
</evidence>
<accession>Q4ZWS6</accession>
<reference key="1">
    <citation type="journal article" date="2005" name="Proc. Natl. Acad. Sci. U.S.A.">
        <title>Comparison of the complete genome sequences of Pseudomonas syringae pv. syringae B728a and pv. tomato DC3000.</title>
        <authorList>
            <person name="Feil H."/>
            <person name="Feil W.S."/>
            <person name="Chain P."/>
            <person name="Larimer F."/>
            <person name="Dibartolo G."/>
            <person name="Copeland A."/>
            <person name="Lykidis A."/>
            <person name="Trong S."/>
            <person name="Nolan M."/>
            <person name="Goltsman E."/>
            <person name="Thiel J."/>
            <person name="Malfatti S."/>
            <person name="Loper J.E."/>
            <person name="Lapidus A."/>
            <person name="Detter J.C."/>
            <person name="Land M."/>
            <person name="Richardson P.M."/>
            <person name="Kyrpides N.C."/>
            <person name="Ivanova N."/>
            <person name="Lindow S.E."/>
        </authorList>
    </citation>
    <scope>NUCLEOTIDE SEQUENCE [LARGE SCALE GENOMIC DNA]</scope>
    <source>
        <strain>B728a</strain>
    </source>
</reference>